<sequence>MELKNFIRDIPDFPQKGVMFRDITPLVKNPEAFKYAIDTIAEELGKYDFDLIVCPEARGFIIAAPLAYKLDKGLVPVRKPGKLPYKTISDVYELEYGKAELHMHEDAIQPNQKVVIIDDVLATGGTAMALKRLVEKAGGIVVASAFLIELTYLNPRNIIKDLPIIAPIKY</sequence>
<comment type="function">
    <text evidence="1">Catalyzes a salvage reaction resulting in the formation of AMP, that is energically less costly than de novo synthesis.</text>
</comment>
<comment type="catalytic activity">
    <reaction evidence="1">
        <text>AMP + diphosphate = 5-phospho-alpha-D-ribose 1-diphosphate + adenine</text>
        <dbReference type="Rhea" id="RHEA:16609"/>
        <dbReference type="ChEBI" id="CHEBI:16708"/>
        <dbReference type="ChEBI" id="CHEBI:33019"/>
        <dbReference type="ChEBI" id="CHEBI:58017"/>
        <dbReference type="ChEBI" id="CHEBI:456215"/>
        <dbReference type="EC" id="2.4.2.7"/>
    </reaction>
</comment>
<comment type="pathway">
    <text evidence="1">Purine metabolism; AMP biosynthesis via salvage pathway; AMP from adenine: step 1/1.</text>
</comment>
<comment type="subunit">
    <text evidence="1">Homodimer.</text>
</comment>
<comment type="subcellular location">
    <subcellularLocation>
        <location evidence="1">Cytoplasm</location>
    </subcellularLocation>
</comment>
<comment type="similarity">
    <text evidence="1">Belongs to the purine/pyrimidine phosphoribosyltransferase family.</text>
</comment>
<dbReference type="EC" id="2.4.2.7" evidence="1"/>
<dbReference type="EMBL" id="CP000771">
    <property type="protein sequence ID" value="ABS60725.1"/>
    <property type="molecule type" value="Genomic_DNA"/>
</dbReference>
<dbReference type="RefSeq" id="WP_011994041.1">
    <property type="nucleotide sequence ID" value="NC_009718.1"/>
</dbReference>
<dbReference type="SMR" id="A7HLE2"/>
<dbReference type="STRING" id="381764.Fnod_0873"/>
<dbReference type="KEGG" id="fno:Fnod_0873"/>
<dbReference type="eggNOG" id="COG0503">
    <property type="taxonomic scope" value="Bacteria"/>
</dbReference>
<dbReference type="HOGENOM" id="CLU_063339_3_0_0"/>
<dbReference type="OrthoDB" id="9803963at2"/>
<dbReference type="UniPathway" id="UPA00588">
    <property type="reaction ID" value="UER00646"/>
</dbReference>
<dbReference type="Proteomes" id="UP000002415">
    <property type="component" value="Chromosome"/>
</dbReference>
<dbReference type="GO" id="GO:0005737">
    <property type="term" value="C:cytoplasm"/>
    <property type="evidence" value="ECO:0007669"/>
    <property type="project" value="UniProtKB-SubCell"/>
</dbReference>
<dbReference type="GO" id="GO:0002055">
    <property type="term" value="F:adenine binding"/>
    <property type="evidence" value="ECO:0007669"/>
    <property type="project" value="TreeGrafter"/>
</dbReference>
<dbReference type="GO" id="GO:0003999">
    <property type="term" value="F:adenine phosphoribosyltransferase activity"/>
    <property type="evidence" value="ECO:0007669"/>
    <property type="project" value="UniProtKB-UniRule"/>
</dbReference>
<dbReference type="GO" id="GO:0016208">
    <property type="term" value="F:AMP binding"/>
    <property type="evidence" value="ECO:0007669"/>
    <property type="project" value="TreeGrafter"/>
</dbReference>
<dbReference type="GO" id="GO:0006168">
    <property type="term" value="P:adenine salvage"/>
    <property type="evidence" value="ECO:0007669"/>
    <property type="project" value="InterPro"/>
</dbReference>
<dbReference type="GO" id="GO:0044209">
    <property type="term" value="P:AMP salvage"/>
    <property type="evidence" value="ECO:0007669"/>
    <property type="project" value="UniProtKB-UniRule"/>
</dbReference>
<dbReference type="GO" id="GO:0006166">
    <property type="term" value="P:purine ribonucleoside salvage"/>
    <property type="evidence" value="ECO:0007669"/>
    <property type="project" value="UniProtKB-KW"/>
</dbReference>
<dbReference type="CDD" id="cd06223">
    <property type="entry name" value="PRTases_typeI"/>
    <property type="match status" value="1"/>
</dbReference>
<dbReference type="FunFam" id="3.40.50.2020:FF:000004">
    <property type="entry name" value="Adenine phosphoribosyltransferase"/>
    <property type="match status" value="1"/>
</dbReference>
<dbReference type="Gene3D" id="3.40.50.2020">
    <property type="match status" value="1"/>
</dbReference>
<dbReference type="HAMAP" id="MF_00004">
    <property type="entry name" value="Aden_phosphoribosyltr"/>
    <property type="match status" value="1"/>
</dbReference>
<dbReference type="InterPro" id="IPR005764">
    <property type="entry name" value="Ade_phspho_trans"/>
</dbReference>
<dbReference type="InterPro" id="IPR000836">
    <property type="entry name" value="PRibTrfase_dom"/>
</dbReference>
<dbReference type="InterPro" id="IPR029057">
    <property type="entry name" value="PRTase-like"/>
</dbReference>
<dbReference type="InterPro" id="IPR050054">
    <property type="entry name" value="UPRTase/APRTase"/>
</dbReference>
<dbReference type="NCBIfam" id="TIGR01090">
    <property type="entry name" value="apt"/>
    <property type="match status" value="1"/>
</dbReference>
<dbReference type="NCBIfam" id="NF002633">
    <property type="entry name" value="PRK02304.1-2"/>
    <property type="match status" value="1"/>
</dbReference>
<dbReference type="NCBIfam" id="NF002634">
    <property type="entry name" value="PRK02304.1-3"/>
    <property type="match status" value="1"/>
</dbReference>
<dbReference type="NCBIfam" id="NF002636">
    <property type="entry name" value="PRK02304.1-5"/>
    <property type="match status" value="1"/>
</dbReference>
<dbReference type="PANTHER" id="PTHR32315">
    <property type="entry name" value="ADENINE PHOSPHORIBOSYLTRANSFERASE"/>
    <property type="match status" value="1"/>
</dbReference>
<dbReference type="PANTHER" id="PTHR32315:SF3">
    <property type="entry name" value="ADENINE PHOSPHORIBOSYLTRANSFERASE"/>
    <property type="match status" value="1"/>
</dbReference>
<dbReference type="Pfam" id="PF00156">
    <property type="entry name" value="Pribosyltran"/>
    <property type="match status" value="1"/>
</dbReference>
<dbReference type="SUPFAM" id="SSF53271">
    <property type="entry name" value="PRTase-like"/>
    <property type="match status" value="1"/>
</dbReference>
<dbReference type="PROSITE" id="PS00103">
    <property type="entry name" value="PUR_PYR_PR_TRANSFER"/>
    <property type="match status" value="1"/>
</dbReference>
<reference key="1">
    <citation type="submission" date="2007-07" db="EMBL/GenBank/DDBJ databases">
        <title>Complete sequence of Fervidobacterium nodosum Rt17-B1.</title>
        <authorList>
            <consortium name="US DOE Joint Genome Institute"/>
            <person name="Copeland A."/>
            <person name="Lucas S."/>
            <person name="Lapidus A."/>
            <person name="Barry K."/>
            <person name="Glavina del Rio T."/>
            <person name="Dalin E."/>
            <person name="Tice H."/>
            <person name="Pitluck S."/>
            <person name="Saunders E."/>
            <person name="Brettin T."/>
            <person name="Bruce D."/>
            <person name="Detter J.C."/>
            <person name="Han C."/>
            <person name="Schmutz J."/>
            <person name="Larimer F."/>
            <person name="Land M."/>
            <person name="Hauser L."/>
            <person name="Kyrpides N."/>
            <person name="Mikhailova N."/>
            <person name="Nelson K."/>
            <person name="Gogarten J.P."/>
            <person name="Noll K."/>
            <person name="Richardson P."/>
        </authorList>
    </citation>
    <scope>NUCLEOTIDE SEQUENCE [LARGE SCALE GENOMIC DNA]</scope>
    <source>
        <strain>ATCC 35602 / DSM 5306 / Rt17-B1</strain>
    </source>
</reference>
<keyword id="KW-0963">Cytoplasm</keyword>
<keyword id="KW-0328">Glycosyltransferase</keyword>
<keyword id="KW-0660">Purine salvage</keyword>
<keyword id="KW-1185">Reference proteome</keyword>
<keyword id="KW-0808">Transferase</keyword>
<organism>
    <name type="scientific">Fervidobacterium nodosum (strain ATCC 35602 / DSM 5306 / Rt17-B1)</name>
    <dbReference type="NCBI Taxonomy" id="381764"/>
    <lineage>
        <taxon>Bacteria</taxon>
        <taxon>Thermotogati</taxon>
        <taxon>Thermotogota</taxon>
        <taxon>Thermotogae</taxon>
        <taxon>Thermotogales</taxon>
        <taxon>Fervidobacteriaceae</taxon>
        <taxon>Fervidobacterium</taxon>
    </lineage>
</organism>
<protein>
    <recommendedName>
        <fullName evidence="1">Adenine phosphoribosyltransferase</fullName>
        <shortName evidence="1">APRT</shortName>
        <ecNumber evidence="1">2.4.2.7</ecNumber>
    </recommendedName>
</protein>
<accession>A7HLE2</accession>
<gene>
    <name evidence="1" type="primary">apt</name>
    <name type="ordered locus">Fnod_0873</name>
</gene>
<feature type="chain" id="PRO_1000070909" description="Adenine phosphoribosyltransferase">
    <location>
        <begin position="1"/>
        <end position="170"/>
    </location>
</feature>
<evidence type="ECO:0000255" key="1">
    <source>
        <dbReference type="HAMAP-Rule" id="MF_00004"/>
    </source>
</evidence>
<proteinExistence type="inferred from homology"/>
<name>APT_FERNB</name>